<protein>
    <recommendedName>
        <fullName evidence="1">Galactose-6-phosphate isomerase subunit LacA 2</fullName>
        <ecNumber evidence="1">5.3.1.26</ecNumber>
    </recommendedName>
</protein>
<feature type="chain" id="PRO_0000411391" description="Galactose-6-phosphate isomerase subunit LacA 2">
    <location>
        <begin position="1"/>
        <end position="142"/>
    </location>
</feature>
<accession>P0DC07</accession>
<accession>Q7CEQ5</accession>
<accession>Q8NZD7</accession>
<gene>
    <name evidence="1" type="primary">lacA2</name>
    <name type="synonym">lacA.2</name>
    <name type="ordered locus">SPs1657</name>
</gene>
<dbReference type="EC" id="5.3.1.26" evidence="1"/>
<dbReference type="EMBL" id="BA000034">
    <property type="protein sequence ID" value="BAC64752.1"/>
    <property type="molecule type" value="Genomic_DNA"/>
</dbReference>
<dbReference type="SMR" id="P0DC07"/>
<dbReference type="KEGG" id="sps:SPs1657"/>
<dbReference type="HOGENOM" id="CLU_091396_4_2_9"/>
<dbReference type="UniPathway" id="UPA00702">
    <property type="reaction ID" value="UER00714"/>
</dbReference>
<dbReference type="GO" id="GO:0050044">
    <property type="term" value="F:galactose-6-phosphate isomerase activity"/>
    <property type="evidence" value="ECO:0007669"/>
    <property type="project" value="UniProtKB-UniRule"/>
</dbReference>
<dbReference type="GO" id="GO:0004751">
    <property type="term" value="F:ribose-5-phosphate isomerase activity"/>
    <property type="evidence" value="ECO:0007669"/>
    <property type="project" value="TreeGrafter"/>
</dbReference>
<dbReference type="GO" id="GO:0019316">
    <property type="term" value="P:D-allose catabolic process"/>
    <property type="evidence" value="ECO:0007669"/>
    <property type="project" value="TreeGrafter"/>
</dbReference>
<dbReference type="GO" id="GO:0019388">
    <property type="term" value="P:galactose catabolic process"/>
    <property type="evidence" value="ECO:0007669"/>
    <property type="project" value="UniProtKB-UniPathway"/>
</dbReference>
<dbReference type="GO" id="GO:0019512">
    <property type="term" value="P:lactose catabolic process via tagatose-6-phosphate"/>
    <property type="evidence" value="ECO:0007669"/>
    <property type="project" value="UniProtKB-UniRule"/>
</dbReference>
<dbReference type="GO" id="GO:0009052">
    <property type="term" value="P:pentose-phosphate shunt, non-oxidative branch"/>
    <property type="evidence" value="ECO:0007669"/>
    <property type="project" value="TreeGrafter"/>
</dbReference>
<dbReference type="Gene3D" id="3.40.1400.10">
    <property type="entry name" value="Sugar-phosphate isomerase, RpiB/LacA/LacB"/>
    <property type="match status" value="1"/>
</dbReference>
<dbReference type="HAMAP" id="MF_01555">
    <property type="entry name" value="LacA"/>
    <property type="match status" value="1"/>
</dbReference>
<dbReference type="InterPro" id="IPR004783">
    <property type="entry name" value="LacA"/>
</dbReference>
<dbReference type="InterPro" id="IPR003500">
    <property type="entry name" value="RpiB_LacA_LacB"/>
</dbReference>
<dbReference type="InterPro" id="IPR036569">
    <property type="entry name" value="RpiB_LacA_LacB_sf"/>
</dbReference>
<dbReference type="NCBIfam" id="TIGR01118">
    <property type="entry name" value="lacA"/>
    <property type="match status" value="1"/>
</dbReference>
<dbReference type="NCBIfam" id="NF006380">
    <property type="entry name" value="PRK08621.1"/>
    <property type="match status" value="1"/>
</dbReference>
<dbReference type="NCBIfam" id="TIGR00689">
    <property type="entry name" value="rpiB_lacA_lacB"/>
    <property type="match status" value="1"/>
</dbReference>
<dbReference type="PANTHER" id="PTHR30345:SF5">
    <property type="entry name" value="GALACTOSE-6-PHOSPHATE ISOMERASE SUBUNIT LACA"/>
    <property type="match status" value="1"/>
</dbReference>
<dbReference type="PANTHER" id="PTHR30345">
    <property type="entry name" value="RIBOSE-5-PHOSPHATE ISOMERASE B"/>
    <property type="match status" value="1"/>
</dbReference>
<dbReference type="Pfam" id="PF02502">
    <property type="entry name" value="LacAB_rpiB"/>
    <property type="match status" value="1"/>
</dbReference>
<dbReference type="PIRSF" id="PIRSF005384">
    <property type="entry name" value="RpiB_LacA_B"/>
    <property type="match status" value="1"/>
</dbReference>
<dbReference type="SUPFAM" id="SSF89623">
    <property type="entry name" value="Ribose/Galactose isomerase RpiB/AlsB"/>
    <property type="match status" value="1"/>
</dbReference>
<reference key="1">
    <citation type="journal article" date="2003" name="Genome Res.">
        <title>Genome sequence of an M3 strain of Streptococcus pyogenes reveals a large-scale genomic rearrangement in invasive strains and new insights into phage evolution.</title>
        <authorList>
            <person name="Nakagawa I."/>
            <person name="Kurokawa K."/>
            <person name="Yamashita A."/>
            <person name="Nakata M."/>
            <person name="Tomiyasu Y."/>
            <person name="Okahashi N."/>
            <person name="Kawabata S."/>
            <person name="Yamazaki K."/>
            <person name="Shiba T."/>
            <person name="Yasunaga T."/>
            <person name="Hayashi H."/>
            <person name="Hattori M."/>
            <person name="Hamada S."/>
        </authorList>
    </citation>
    <scope>NUCLEOTIDE SEQUENCE [LARGE SCALE GENOMIC DNA]</scope>
    <source>
        <strain>SSI-1</strain>
    </source>
</reference>
<comment type="catalytic activity">
    <reaction evidence="1">
        <text>aldehydo-D-galactose 6-phosphate = keto-D-tagatose 6-phosphate</text>
        <dbReference type="Rhea" id="RHEA:13033"/>
        <dbReference type="ChEBI" id="CHEBI:58255"/>
        <dbReference type="ChEBI" id="CHEBI:134283"/>
        <dbReference type="EC" id="5.3.1.26"/>
    </reaction>
</comment>
<comment type="pathway">
    <text evidence="1">Carbohydrate metabolism; D-galactose 6-phosphate degradation; D-tagatose 6-phosphate from D-galactose 6-phosphate: step 1/1.</text>
</comment>
<comment type="subunit">
    <text evidence="1">Heteromultimeric protein consisting of LacA and LacB.</text>
</comment>
<comment type="similarity">
    <text evidence="1">Belongs to the LacAB/RpiB family.</text>
</comment>
<keyword id="KW-0413">Isomerase</keyword>
<keyword id="KW-0423">Lactose metabolism</keyword>
<proteinExistence type="inferred from homology"/>
<name>LACA2_STRPQ</name>
<sequence>MAIIIGADKAGQELKEVIKDYLKEGKYEVVDVSENEVRDFVDTTLAVAKEVNASEDNLGIVIDAYGVGSFMVATKIKGMVAAEVSDERSAYMTRGHNNARIITLGSEISAPGIAKNIIKGFVEGKYDGGRHQVRVDMLNKMC</sequence>
<organism>
    <name type="scientific">Streptococcus pyogenes serotype M3 (strain SSI-1)</name>
    <dbReference type="NCBI Taxonomy" id="193567"/>
    <lineage>
        <taxon>Bacteria</taxon>
        <taxon>Bacillati</taxon>
        <taxon>Bacillota</taxon>
        <taxon>Bacilli</taxon>
        <taxon>Lactobacillales</taxon>
        <taxon>Streptococcaceae</taxon>
        <taxon>Streptococcus</taxon>
    </lineage>
</organism>
<evidence type="ECO:0000255" key="1">
    <source>
        <dbReference type="HAMAP-Rule" id="MF_01555"/>
    </source>
</evidence>